<dbReference type="EC" id="3.5.2.7"/>
<dbReference type="EMBL" id="BC142251">
    <property type="protein sequence ID" value="AAI42252.1"/>
    <property type="molecule type" value="mRNA"/>
</dbReference>
<dbReference type="RefSeq" id="NP_001092342.1">
    <property type="nucleotide sequence ID" value="NM_001098872.2"/>
</dbReference>
<dbReference type="SMR" id="A5PJV3"/>
<dbReference type="FunCoup" id="A5PJV3">
    <property type="interactions" value="47"/>
</dbReference>
<dbReference type="STRING" id="9913.ENSBTAP00000021647"/>
<dbReference type="PaxDb" id="9913-ENSBTAP00000021647"/>
<dbReference type="PeptideAtlas" id="A5PJV3"/>
<dbReference type="GeneID" id="505315"/>
<dbReference type="KEGG" id="bta:505315"/>
<dbReference type="CTD" id="144193"/>
<dbReference type="VEuPathDB" id="HostDB:ENSBTAG00000016275"/>
<dbReference type="eggNOG" id="KOG3968">
    <property type="taxonomic scope" value="Eukaryota"/>
</dbReference>
<dbReference type="HOGENOM" id="CLU_041647_2_0_1"/>
<dbReference type="InParanoid" id="A5PJV3"/>
<dbReference type="OMA" id="CAPHARW"/>
<dbReference type="OrthoDB" id="194468at2759"/>
<dbReference type="TreeFam" id="TF312878"/>
<dbReference type="Reactome" id="R-BTA-70921">
    <property type="pathway name" value="Histidine catabolism"/>
</dbReference>
<dbReference type="UniPathway" id="UPA00379">
    <property type="reaction ID" value="UER00551"/>
</dbReference>
<dbReference type="Proteomes" id="UP000009136">
    <property type="component" value="Chromosome 5"/>
</dbReference>
<dbReference type="Bgee" id="ENSBTAG00000016275">
    <property type="expression patterns" value="Expressed in liver and 98 other cell types or tissues"/>
</dbReference>
<dbReference type="GO" id="GO:0005737">
    <property type="term" value="C:cytoplasm"/>
    <property type="evidence" value="ECO:0007669"/>
    <property type="project" value="InterPro"/>
</dbReference>
<dbReference type="GO" id="GO:0050480">
    <property type="term" value="F:imidazolonepropionase activity"/>
    <property type="evidence" value="ECO:0000318"/>
    <property type="project" value="GO_Central"/>
</dbReference>
<dbReference type="GO" id="GO:0046872">
    <property type="term" value="F:metal ion binding"/>
    <property type="evidence" value="ECO:0007669"/>
    <property type="project" value="UniProtKB-KW"/>
</dbReference>
<dbReference type="GO" id="GO:0006548">
    <property type="term" value="P:L-histidine catabolic process"/>
    <property type="evidence" value="ECO:0000318"/>
    <property type="project" value="GO_Central"/>
</dbReference>
<dbReference type="GO" id="GO:0019556">
    <property type="term" value="P:L-histidine catabolic process to glutamate and formamide"/>
    <property type="evidence" value="ECO:0007669"/>
    <property type="project" value="UniProtKB-UniPathway"/>
</dbReference>
<dbReference type="GO" id="GO:0019557">
    <property type="term" value="P:L-histidine catabolic process to glutamate and formate"/>
    <property type="evidence" value="ECO:0007669"/>
    <property type="project" value="UniProtKB-UniPathway"/>
</dbReference>
<dbReference type="CDD" id="cd01296">
    <property type="entry name" value="Imidazolone-5PH"/>
    <property type="match status" value="1"/>
</dbReference>
<dbReference type="FunFam" id="3.20.20.140:FF:000007">
    <property type="entry name" value="Imidazolonepropionase"/>
    <property type="match status" value="1"/>
</dbReference>
<dbReference type="Gene3D" id="3.20.20.140">
    <property type="entry name" value="Metal-dependent hydrolases"/>
    <property type="match status" value="1"/>
</dbReference>
<dbReference type="Gene3D" id="2.30.40.10">
    <property type="entry name" value="Urease, subunit C, domain 1"/>
    <property type="match status" value="1"/>
</dbReference>
<dbReference type="InterPro" id="IPR006680">
    <property type="entry name" value="Amidohydro-rel"/>
</dbReference>
<dbReference type="InterPro" id="IPR005920">
    <property type="entry name" value="HutI"/>
</dbReference>
<dbReference type="InterPro" id="IPR011059">
    <property type="entry name" value="Metal-dep_hydrolase_composite"/>
</dbReference>
<dbReference type="InterPro" id="IPR032466">
    <property type="entry name" value="Metal_Hydrolase"/>
</dbReference>
<dbReference type="NCBIfam" id="TIGR01224">
    <property type="entry name" value="hutI"/>
    <property type="match status" value="1"/>
</dbReference>
<dbReference type="PANTHER" id="PTHR42752">
    <property type="entry name" value="IMIDAZOLONEPROPIONASE"/>
    <property type="match status" value="1"/>
</dbReference>
<dbReference type="PANTHER" id="PTHR42752:SF1">
    <property type="entry name" value="IMIDAZOLONEPROPIONASE-RELATED"/>
    <property type="match status" value="1"/>
</dbReference>
<dbReference type="Pfam" id="PF01979">
    <property type="entry name" value="Amidohydro_1"/>
    <property type="match status" value="1"/>
</dbReference>
<dbReference type="SUPFAM" id="SSF51338">
    <property type="entry name" value="Composite domain of metallo-dependent hydrolases"/>
    <property type="match status" value="2"/>
</dbReference>
<dbReference type="SUPFAM" id="SSF51556">
    <property type="entry name" value="Metallo-dependent hydrolases"/>
    <property type="match status" value="1"/>
</dbReference>
<accession>A5PJV3</accession>
<gene>
    <name type="primary">AMDHD1</name>
</gene>
<evidence type="ECO:0000250" key="1"/>
<evidence type="ECO:0000250" key="2">
    <source>
        <dbReference type="UniProtKB" id="A0KF84"/>
    </source>
</evidence>
<evidence type="ECO:0000250" key="3">
    <source>
        <dbReference type="UniProtKB" id="P42084"/>
    </source>
</evidence>
<evidence type="ECO:0000250" key="4">
    <source>
        <dbReference type="UniProtKB" id="Q8U8Z6"/>
    </source>
</evidence>
<evidence type="ECO:0000305" key="5"/>
<name>HUTI_BOVIN</name>
<comment type="catalytic activity">
    <reaction>
        <text>4-imidazolone-5-propanoate + H2O = N-formimidoyl-L-glutamate</text>
        <dbReference type="Rhea" id="RHEA:23660"/>
        <dbReference type="ChEBI" id="CHEBI:15377"/>
        <dbReference type="ChEBI" id="CHEBI:58928"/>
        <dbReference type="ChEBI" id="CHEBI:77893"/>
        <dbReference type="EC" id="3.5.2.7"/>
    </reaction>
</comment>
<comment type="cofactor">
    <cofactor evidence="1">
        <name>Zn(2+)</name>
        <dbReference type="ChEBI" id="CHEBI:29105"/>
    </cofactor>
    <cofactor evidence="1">
        <name>Fe(3+)</name>
        <dbReference type="ChEBI" id="CHEBI:29034"/>
    </cofactor>
    <text evidence="1">Binds 1 zinc or iron ion per subunit.</text>
</comment>
<comment type="pathway">
    <text>Amino-acid degradation; L-histidine degradation into L-glutamate; N-formimidoyl-L-glutamate from L-histidine: step 3/3.</text>
</comment>
<comment type="similarity">
    <text evidence="5">Belongs to the metallo-dependent hydrolases superfamily. HutI family.</text>
</comment>
<proteinExistence type="evidence at transcript level"/>
<organism>
    <name type="scientific">Bos taurus</name>
    <name type="common">Bovine</name>
    <dbReference type="NCBI Taxonomy" id="9913"/>
    <lineage>
        <taxon>Eukaryota</taxon>
        <taxon>Metazoa</taxon>
        <taxon>Chordata</taxon>
        <taxon>Craniata</taxon>
        <taxon>Vertebrata</taxon>
        <taxon>Euteleostomi</taxon>
        <taxon>Mammalia</taxon>
        <taxon>Eutheria</taxon>
        <taxon>Laurasiatheria</taxon>
        <taxon>Artiodactyla</taxon>
        <taxon>Ruminantia</taxon>
        <taxon>Pecora</taxon>
        <taxon>Bovidae</taxon>
        <taxon>Bovinae</taxon>
        <taxon>Bos</taxon>
    </lineage>
</organism>
<reference key="1">
    <citation type="submission" date="2007-06" db="EMBL/GenBank/DDBJ databases">
        <authorList>
            <consortium name="NIH - Mammalian Gene Collection (MGC) project"/>
        </authorList>
    </citation>
    <scope>NUCLEOTIDE SEQUENCE [LARGE SCALE MRNA]</scope>
    <source>
        <strain>Hereford</strain>
        <tissue>Fetal liver</tissue>
    </source>
</reference>
<sequence>MAGGHRLLLENARQVVLVCARGERFLTRDALRSLEVLEGASLVVGTDGFIKAIGPADAIQKQFSEETFEERIDCSGKCILPGLVDAHTHPVWAGERVHEFAMKLAGATYMDIHQAGGGINFTVERTRQASEEELYSSFQQRLGCMMRAGTTLVECKSGYGLNLETELKMLRVIERARQELDIGISATYCGAHSVPKGKTASEAADDIIKNHLPRLKELGRNGEIHVDNIDVFCEKDVFDLDSTRRILQSGKDIGLQINFHGDELHPMKAAELGVELGAQAISHLEEVSDEGIAAMASARCSAVLLPTTAYMLRLKQPRARKMLDEGVIVALGSDFNPNAYCFSMPMVMHLACVNMRMSMPEALAAATINAAYALGKSHTQGSLEVGKQGDLIIINSPRWEHLIYQFGGHHELIDYVIAKGKVIYKK</sequence>
<keyword id="KW-0369">Histidine metabolism</keyword>
<keyword id="KW-0378">Hydrolase</keyword>
<keyword id="KW-0408">Iron</keyword>
<keyword id="KW-0479">Metal-binding</keyword>
<keyword id="KW-1185">Reference proteome</keyword>
<keyword id="KW-0862">Zinc</keyword>
<protein>
    <recommendedName>
        <fullName>Probable imidazolonepropionase</fullName>
        <ecNumber>3.5.2.7</ecNumber>
    </recommendedName>
    <alternativeName>
        <fullName>Amidohydrolase domain-containing protein 1</fullName>
    </alternativeName>
</protein>
<feature type="chain" id="PRO_0000314849" description="Probable imidazolonepropionase">
    <location>
        <begin position="1"/>
        <end position="426"/>
    </location>
</feature>
<feature type="binding site" evidence="3">
    <location>
        <position position="159"/>
    </location>
    <ligand>
        <name>4-imidazolone-5-propanoate</name>
        <dbReference type="ChEBI" id="CHEBI:77893"/>
    </ligand>
</feature>
<feature type="binding site" evidence="4">
    <location>
        <position position="159"/>
    </location>
    <ligand>
        <name>N-formimidoyl-L-glutamate</name>
        <dbReference type="ChEBI" id="CHEBI:58928"/>
    </ligand>
</feature>
<feature type="binding site" evidence="3">
    <location>
        <position position="192"/>
    </location>
    <ligand>
        <name>4-imidazolone-5-propanoate</name>
        <dbReference type="ChEBI" id="CHEBI:77893"/>
    </ligand>
</feature>
<feature type="binding site" evidence="2">
    <location>
        <position position="260"/>
    </location>
    <ligand>
        <name>Fe(3+)</name>
        <dbReference type="ChEBI" id="CHEBI:29034"/>
    </ligand>
</feature>
<feature type="binding site" evidence="3">
    <location>
        <position position="260"/>
    </location>
    <ligand>
        <name>Zn(2+)</name>
        <dbReference type="ChEBI" id="CHEBI:29105"/>
    </ligand>
</feature>
<feature type="binding site" evidence="3">
    <location>
        <position position="263"/>
    </location>
    <ligand>
        <name>4-imidazolone-5-propanoate</name>
        <dbReference type="ChEBI" id="CHEBI:77893"/>
    </ligand>
</feature>
<feature type="binding site" evidence="2">
    <location>
        <position position="334"/>
    </location>
    <ligand>
        <name>Fe(3+)</name>
        <dbReference type="ChEBI" id="CHEBI:29034"/>
    </ligand>
</feature>
<feature type="binding site" evidence="3">
    <location>
        <position position="334"/>
    </location>
    <ligand>
        <name>Zn(2+)</name>
        <dbReference type="ChEBI" id="CHEBI:29105"/>
    </ligand>
</feature>
<feature type="binding site" evidence="4">
    <location>
        <position position="336"/>
    </location>
    <ligand>
        <name>N-formimidoyl-L-glutamate</name>
        <dbReference type="ChEBI" id="CHEBI:58928"/>
    </ligand>
</feature>